<feature type="chain" id="PRO_1000186241" description="Purine nucleoside phosphorylase DeoD-type">
    <location>
        <begin position="1"/>
        <end position="233"/>
    </location>
</feature>
<feature type="active site" description="Proton donor" evidence="2">
    <location>
        <position position="204"/>
    </location>
</feature>
<feature type="binding site" evidence="1">
    <location>
        <position position="4"/>
    </location>
    <ligand>
        <name>a purine D-ribonucleoside</name>
        <dbReference type="ChEBI" id="CHEBI:142355"/>
        <note>ligand shared between dimeric partners</note>
    </ligand>
</feature>
<feature type="binding site" description="in other chain" evidence="1">
    <location>
        <position position="20"/>
    </location>
    <ligand>
        <name>phosphate</name>
        <dbReference type="ChEBI" id="CHEBI:43474"/>
        <note>ligand shared between dimeric partners</note>
    </ligand>
</feature>
<feature type="binding site" description="in other chain" evidence="1">
    <location>
        <position position="24"/>
    </location>
    <ligand>
        <name>phosphate</name>
        <dbReference type="ChEBI" id="CHEBI:43474"/>
        <note>ligand shared between dimeric partners</note>
    </ligand>
</feature>
<feature type="binding site" evidence="1">
    <location>
        <position position="43"/>
    </location>
    <ligand>
        <name>phosphate</name>
        <dbReference type="ChEBI" id="CHEBI:43474"/>
        <note>ligand shared between dimeric partners</note>
    </ligand>
</feature>
<feature type="binding site" description="in other chain" evidence="1">
    <location>
        <begin position="87"/>
        <end position="90"/>
    </location>
    <ligand>
        <name>phosphate</name>
        <dbReference type="ChEBI" id="CHEBI:43474"/>
        <note>ligand shared between dimeric partners</note>
    </ligand>
</feature>
<feature type="binding site" description="in other chain" evidence="1">
    <location>
        <begin position="179"/>
        <end position="181"/>
    </location>
    <ligand>
        <name>a purine D-ribonucleoside</name>
        <dbReference type="ChEBI" id="CHEBI:142355"/>
        <note>ligand shared between dimeric partners</note>
    </ligand>
</feature>
<feature type="binding site" description="in other chain" evidence="1">
    <location>
        <begin position="203"/>
        <end position="204"/>
    </location>
    <ligand>
        <name>a purine D-ribonucleoside</name>
        <dbReference type="ChEBI" id="CHEBI:142355"/>
        <note>ligand shared between dimeric partners</note>
    </ligand>
</feature>
<feature type="site" description="Important for catalytic activity" evidence="2">
    <location>
        <position position="217"/>
    </location>
</feature>
<evidence type="ECO:0000250" key="1">
    <source>
        <dbReference type="UniProtKB" id="P50389"/>
    </source>
</evidence>
<evidence type="ECO:0000255" key="2">
    <source>
        <dbReference type="HAMAP-Rule" id="MF_01627"/>
    </source>
</evidence>
<dbReference type="EC" id="2.4.2.1" evidence="2"/>
<dbReference type="EMBL" id="CP000924">
    <property type="protein sequence ID" value="ABY94402.1"/>
    <property type="molecule type" value="Genomic_DNA"/>
</dbReference>
<dbReference type="RefSeq" id="WP_003867214.1">
    <property type="nucleotide sequence ID" value="NC_010321.1"/>
</dbReference>
<dbReference type="SMR" id="B0K889"/>
<dbReference type="STRING" id="340099.Teth39_0743"/>
<dbReference type="KEGG" id="tpd:Teth39_0743"/>
<dbReference type="eggNOG" id="COG0813">
    <property type="taxonomic scope" value="Bacteria"/>
</dbReference>
<dbReference type="HOGENOM" id="CLU_068457_2_0_9"/>
<dbReference type="Proteomes" id="UP000002156">
    <property type="component" value="Chromosome"/>
</dbReference>
<dbReference type="GO" id="GO:0005829">
    <property type="term" value="C:cytosol"/>
    <property type="evidence" value="ECO:0007669"/>
    <property type="project" value="TreeGrafter"/>
</dbReference>
<dbReference type="GO" id="GO:0004731">
    <property type="term" value="F:purine-nucleoside phosphorylase activity"/>
    <property type="evidence" value="ECO:0007669"/>
    <property type="project" value="UniProtKB-UniRule"/>
</dbReference>
<dbReference type="GO" id="GO:0006152">
    <property type="term" value="P:purine nucleoside catabolic process"/>
    <property type="evidence" value="ECO:0007669"/>
    <property type="project" value="TreeGrafter"/>
</dbReference>
<dbReference type="CDD" id="cd09006">
    <property type="entry name" value="PNP_EcPNPI-like"/>
    <property type="match status" value="1"/>
</dbReference>
<dbReference type="Gene3D" id="3.40.50.1580">
    <property type="entry name" value="Nucleoside phosphorylase domain"/>
    <property type="match status" value="1"/>
</dbReference>
<dbReference type="HAMAP" id="MF_01627">
    <property type="entry name" value="Pur_nucleosid_phosp"/>
    <property type="match status" value="1"/>
</dbReference>
<dbReference type="InterPro" id="IPR004402">
    <property type="entry name" value="DeoD-type"/>
</dbReference>
<dbReference type="InterPro" id="IPR018016">
    <property type="entry name" value="Nucleoside_phosphorylase_CS"/>
</dbReference>
<dbReference type="InterPro" id="IPR000845">
    <property type="entry name" value="Nucleoside_phosphorylase_d"/>
</dbReference>
<dbReference type="InterPro" id="IPR035994">
    <property type="entry name" value="Nucleoside_phosphorylase_sf"/>
</dbReference>
<dbReference type="NCBIfam" id="TIGR00107">
    <property type="entry name" value="deoD"/>
    <property type="match status" value="1"/>
</dbReference>
<dbReference type="NCBIfam" id="NF004489">
    <property type="entry name" value="PRK05819.1"/>
    <property type="match status" value="1"/>
</dbReference>
<dbReference type="PANTHER" id="PTHR43691:SF11">
    <property type="entry name" value="FI09636P-RELATED"/>
    <property type="match status" value="1"/>
</dbReference>
<dbReference type="PANTHER" id="PTHR43691">
    <property type="entry name" value="URIDINE PHOSPHORYLASE"/>
    <property type="match status" value="1"/>
</dbReference>
<dbReference type="Pfam" id="PF01048">
    <property type="entry name" value="PNP_UDP_1"/>
    <property type="match status" value="1"/>
</dbReference>
<dbReference type="SUPFAM" id="SSF53167">
    <property type="entry name" value="Purine and uridine phosphorylases"/>
    <property type="match status" value="1"/>
</dbReference>
<dbReference type="PROSITE" id="PS01232">
    <property type="entry name" value="PNP_UDP_1"/>
    <property type="match status" value="1"/>
</dbReference>
<keyword id="KW-0328">Glycosyltransferase</keyword>
<keyword id="KW-1185">Reference proteome</keyword>
<keyword id="KW-0808">Transferase</keyword>
<sequence>MSIHIGAKENEIAQTVLLPGDPLRAKYIAENFLEDAKCYNEVRGMYGFTGYYKGKRVSVQGTGMGVPSLSIYVNELINSYNVKNLIRIGTCGSLQPDIKLRDIVIAMSSSTDSAINKIRFNGMDYAPTASFKLLKKAYDKAMELGIQPKVGNILTTDTFYNDDPDSWKLWAKFGVLAVEMETAGLYTLAAKYNVDALTILTVSDSLVTGEATTAEERQKTFMNMVKIALEIAE</sequence>
<gene>
    <name evidence="2" type="primary">deoD</name>
    <name type="ordered locus">Teth39_0743</name>
</gene>
<accession>B0K889</accession>
<proteinExistence type="inferred from homology"/>
<name>DEOD_THEP3</name>
<reference key="1">
    <citation type="submission" date="2008-01" db="EMBL/GenBank/DDBJ databases">
        <title>Complete sequence of Thermoanaerobacter pseudethanolicus 39E.</title>
        <authorList>
            <person name="Copeland A."/>
            <person name="Lucas S."/>
            <person name="Lapidus A."/>
            <person name="Barry K."/>
            <person name="Glavina del Rio T."/>
            <person name="Dalin E."/>
            <person name="Tice H."/>
            <person name="Pitluck S."/>
            <person name="Bruce D."/>
            <person name="Goodwin L."/>
            <person name="Saunders E."/>
            <person name="Brettin T."/>
            <person name="Detter J.C."/>
            <person name="Han C."/>
            <person name="Schmutz J."/>
            <person name="Larimer F."/>
            <person name="Land M."/>
            <person name="Hauser L."/>
            <person name="Kyrpides N."/>
            <person name="Lykidis A."/>
            <person name="Hemme C."/>
            <person name="Fields M.W."/>
            <person name="He Z."/>
            <person name="Zhou J."/>
            <person name="Richardson P."/>
        </authorList>
    </citation>
    <scope>NUCLEOTIDE SEQUENCE [LARGE SCALE GENOMIC DNA]</scope>
    <source>
        <strain>ATCC 33223 / DSM 2355 / 39E</strain>
    </source>
</reference>
<organism>
    <name type="scientific">Thermoanaerobacter pseudethanolicus (strain ATCC 33223 / 39E)</name>
    <name type="common">Clostridium thermohydrosulfuricum</name>
    <dbReference type="NCBI Taxonomy" id="340099"/>
    <lineage>
        <taxon>Bacteria</taxon>
        <taxon>Bacillati</taxon>
        <taxon>Bacillota</taxon>
        <taxon>Clostridia</taxon>
        <taxon>Thermoanaerobacterales</taxon>
        <taxon>Thermoanaerobacteraceae</taxon>
        <taxon>Thermoanaerobacter</taxon>
    </lineage>
</organism>
<comment type="function">
    <text evidence="2">Catalyzes the reversible phosphorolytic breakdown of the N-glycosidic bond in the beta-(deoxy)ribonucleoside molecules, with the formation of the corresponding free purine bases and pentose-1-phosphate.</text>
</comment>
<comment type="catalytic activity">
    <reaction evidence="2">
        <text>a purine D-ribonucleoside + phosphate = a purine nucleobase + alpha-D-ribose 1-phosphate</text>
        <dbReference type="Rhea" id="RHEA:19805"/>
        <dbReference type="ChEBI" id="CHEBI:26386"/>
        <dbReference type="ChEBI" id="CHEBI:43474"/>
        <dbReference type="ChEBI" id="CHEBI:57720"/>
        <dbReference type="ChEBI" id="CHEBI:142355"/>
        <dbReference type="EC" id="2.4.2.1"/>
    </reaction>
</comment>
<comment type="catalytic activity">
    <reaction evidence="2">
        <text>a purine 2'-deoxy-D-ribonucleoside + phosphate = a purine nucleobase + 2-deoxy-alpha-D-ribose 1-phosphate</text>
        <dbReference type="Rhea" id="RHEA:36431"/>
        <dbReference type="ChEBI" id="CHEBI:26386"/>
        <dbReference type="ChEBI" id="CHEBI:43474"/>
        <dbReference type="ChEBI" id="CHEBI:57259"/>
        <dbReference type="ChEBI" id="CHEBI:142361"/>
        <dbReference type="EC" id="2.4.2.1"/>
    </reaction>
</comment>
<comment type="subunit">
    <text evidence="2">Homohexamer; trimer of homodimers.</text>
</comment>
<comment type="similarity">
    <text evidence="2">Belongs to the PNP/UDP phosphorylase family.</text>
</comment>
<protein>
    <recommendedName>
        <fullName evidence="2">Purine nucleoside phosphorylase DeoD-type</fullName>
        <shortName evidence="2">PNP</shortName>
        <ecNumber evidence="2">2.4.2.1</ecNumber>
    </recommendedName>
</protein>